<proteinExistence type="inferred from homology"/>
<dbReference type="EC" id="4.2.1.33" evidence="1"/>
<dbReference type="EMBL" id="AE000513">
    <property type="protein sequence ID" value="AAF11172.1"/>
    <property type="molecule type" value="Genomic_DNA"/>
</dbReference>
<dbReference type="PIR" id="D75373">
    <property type="entry name" value="D75373"/>
</dbReference>
<dbReference type="RefSeq" id="NP_295333.1">
    <property type="nucleotide sequence ID" value="NC_001263.1"/>
</dbReference>
<dbReference type="RefSeq" id="WP_010888248.1">
    <property type="nucleotide sequence ID" value="NC_001263.1"/>
</dbReference>
<dbReference type="SMR" id="Q9RTY9"/>
<dbReference type="STRING" id="243230.DR_1610"/>
<dbReference type="PaxDb" id="243230-DR_1610"/>
<dbReference type="EnsemblBacteria" id="AAF11172">
    <property type="protein sequence ID" value="AAF11172"/>
    <property type="gene ID" value="DR_1610"/>
</dbReference>
<dbReference type="GeneID" id="69517846"/>
<dbReference type="KEGG" id="dra:DR_1610"/>
<dbReference type="PATRIC" id="fig|243230.17.peg.1815"/>
<dbReference type="eggNOG" id="COG0065">
    <property type="taxonomic scope" value="Bacteria"/>
</dbReference>
<dbReference type="HOGENOM" id="CLU_006714_3_4_0"/>
<dbReference type="InParanoid" id="Q9RTY9"/>
<dbReference type="OrthoDB" id="9764318at2"/>
<dbReference type="UniPathway" id="UPA00048">
    <property type="reaction ID" value="UER00071"/>
</dbReference>
<dbReference type="Proteomes" id="UP000002524">
    <property type="component" value="Chromosome 1"/>
</dbReference>
<dbReference type="GO" id="GO:0003861">
    <property type="term" value="F:3-isopropylmalate dehydratase activity"/>
    <property type="evidence" value="ECO:0007669"/>
    <property type="project" value="UniProtKB-UniRule"/>
</dbReference>
<dbReference type="GO" id="GO:0051539">
    <property type="term" value="F:4 iron, 4 sulfur cluster binding"/>
    <property type="evidence" value="ECO:0007669"/>
    <property type="project" value="UniProtKB-KW"/>
</dbReference>
<dbReference type="GO" id="GO:0046872">
    <property type="term" value="F:metal ion binding"/>
    <property type="evidence" value="ECO:0007669"/>
    <property type="project" value="UniProtKB-KW"/>
</dbReference>
<dbReference type="GO" id="GO:0009098">
    <property type="term" value="P:L-leucine biosynthetic process"/>
    <property type="evidence" value="ECO:0007669"/>
    <property type="project" value="UniProtKB-UniRule"/>
</dbReference>
<dbReference type="Gene3D" id="3.30.499.10">
    <property type="entry name" value="Aconitase, domain 3"/>
    <property type="match status" value="2"/>
</dbReference>
<dbReference type="HAMAP" id="MF_01027">
    <property type="entry name" value="LeuC_type2"/>
    <property type="match status" value="1"/>
</dbReference>
<dbReference type="InterPro" id="IPR015931">
    <property type="entry name" value="Acnase/IPM_dHydase_lsu_aba_1/3"/>
</dbReference>
<dbReference type="InterPro" id="IPR001030">
    <property type="entry name" value="Acoase/IPM_deHydtase_lsu_aba"/>
</dbReference>
<dbReference type="InterPro" id="IPR018136">
    <property type="entry name" value="Aconitase_4Fe-4S_BS"/>
</dbReference>
<dbReference type="InterPro" id="IPR036008">
    <property type="entry name" value="Aconitase_4Fe-4S_dom"/>
</dbReference>
<dbReference type="InterPro" id="IPR011826">
    <property type="entry name" value="HAcnase/IPMdehydase_lsu_prok"/>
</dbReference>
<dbReference type="InterPro" id="IPR006251">
    <property type="entry name" value="Homoacnase/IPMdehydase_lsu"/>
</dbReference>
<dbReference type="InterPro" id="IPR050067">
    <property type="entry name" value="IPM_dehydratase_rel_enz"/>
</dbReference>
<dbReference type="NCBIfam" id="TIGR01343">
    <property type="entry name" value="hacA_fam"/>
    <property type="match status" value="1"/>
</dbReference>
<dbReference type="NCBIfam" id="TIGR02086">
    <property type="entry name" value="IPMI_arch"/>
    <property type="match status" value="1"/>
</dbReference>
<dbReference type="NCBIfam" id="NF001614">
    <property type="entry name" value="PRK00402.1"/>
    <property type="match status" value="1"/>
</dbReference>
<dbReference type="PANTHER" id="PTHR43822:SF21">
    <property type="entry name" value="3-ISOPROPYLMALATE DEHYDRATASE LARGE SUBUNIT 1"/>
    <property type="match status" value="1"/>
</dbReference>
<dbReference type="PANTHER" id="PTHR43822">
    <property type="entry name" value="HOMOACONITASE, MITOCHONDRIAL-RELATED"/>
    <property type="match status" value="1"/>
</dbReference>
<dbReference type="Pfam" id="PF00330">
    <property type="entry name" value="Aconitase"/>
    <property type="match status" value="2"/>
</dbReference>
<dbReference type="PRINTS" id="PR00415">
    <property type="entry name" value="ACONITASE"/>
</dbReference>
<dbReference type="SUPFAM" id="SSF53732">
    <property type="entry name" value="Aconitase iron-sulfur domain"/>
    <property type="match status" value="1"/>
</dbReference>
<dbReference type="PROSITE" id="PS00450">
    <property type="entry name" value="ACONITASE_1"/>
    <property type="match status" value="1"/>
</dbReference>
<dbReference type="PROSITE" id="PS01244">
    <property type="entry name" value="ACONITASE_2"/>
    <property type="match status" value="1"/>
</dbReference>
<accession>Q9RTY9</accession>
<comment type="function">
    <text evidence="1">Catalyzes the isomerization between 2-isopropylmalate and 3-isopropylmalate, via the formation of 2-isopropylmaleate.</text>
</comment>
<comment type="catalytic activity">
    <reaction evidence="1">
        <text>(2R,3S)-3-isopropylmalate = (2S)-2-isopropylmalate</text>
        <dbReference type="Rhea" id="RHEA:32287"/>
        <dbReference type="ChEBI" id="CHEBI:1178"/>
        <dbReference type="ChEBI" id="CHEBI:35121"/>
        <dbReference type="EC" id="4.2.1.33"/>
    </reaction>
</comment>
<comment type="cofactor">
    <cofactor evidence="1">
        <name>[4Fe-4S] cluster</name>
        <dbReference type="ChEBI" id="CHEBI:49883"/>
    </cofactor>
    <text evidence="1">Binds 1 [4Fe-4S] cluster per subunit.</text>
</comment>
<comment type="pathway">
    <text evidence="1">Amino-acid biosynthesis; L-leucine biosynthesis; L-leucine from 3-methyl-2-oxobutanoate: step 2/4.</text>
</comment>
<comment type="subunit">
    <text evidence="1">Heterodimer of LeuC and LeuD.</text>
</comment>
<comment type="similarity">
    <text evidence="1">Belongs to the aconitase/IPM isomerase family. LeuC type 2 subfamily.</text>
</comment>
<protein>
    <recommendedName>
        <fullName evidence="1">3-isopropylmalate dehydratase large subunit 1</fullName>
        <ecNumber evidence="1">4.2.1.33</ecNumber>
    </recommendedName>
    <alternativeName>
        <fullName evidence="1">Alpha-IPM isomerase 1</fullName>
        <shortName evidence="1">IPMI 1</shortName>
    </alternativeName>
    <alternativeName>
        <fullName evidence="1">Isopropylmalate isomerase 1</fullName>
    </alternativeName>
</protein>
<organism>
    <name type="scientific">Deinococcus radiodurans (strain ATCC 13939 / DSM 20539 / JCM 16871 / CCUG 27074 / LMG 4051 / NBRC 15346 / NCIMB 9279 / VKM B-1422 / R1)</name>
    <dbReference type="NCBI Taxonomy" id="243230"/>
    <lineage>
        <taxon>Bacteria</taxon>
        <taxon>Thermotogati</taxon>
        <taxon>Deinococcota</taxon>
        <taxon>Deinococci</taxon>
        <taxon>Deinococcales</taxon>
        <taxon>Deinococcaceae</taxon>
        <taxon>Deinococcus</taxon>
    </lineage>
</organism>
<name>LEUC1_DEIRA</name>
<keyword id="KW-0004">4Fe-4S</keyword>
<keyword id="KW-0028">Amino-acid biosynthesis</keyword>
<keyword id="KW-0100">Branched-chain amino acid biosynthesis</keyword>
<keyword id="KW-0408">Iron</keyword>
<keyword id="KW-0411">Iron-sulfur</keyword>
<keyword id="KW-0432">Leucine biosynthesis</keyword>
<keyword id="KW-0456">Lyase</keyword>
<keyword id="KW-0479">Metal-binding</keyword>
<keyword id="KW-1185">Reference proteome</keyword>
<gene>
    <name evidence="1" type="primary">leuC1</name>
    <name type="ordered locus">DR_1610</name>
</gene>
<reference key="1">
    <citation type="journal article" date="1999" name="Science">
        <title>Genome sequence of the radioresistant bacterium Deinococcus radiodurans R1.</title>
        <authorList>
            <person name="White O."/>
            <person name="Eisen J.A."/>
            <person name="Heidelberg J.F."/>
            <person name="Hickey E.K."/>
            <person name="Peterson J.D."/>
            <person name="Dodson R.J."/>
            <person name="Haft D.H."/>
            <person name="Gwinn M.L."/>
            <person name="Nelson W.C."/>
            <person name="Richardson D.L."/>
            <person name="Moffat K.S."/>
            <person name="Qin H."/>
            <person name="Jiang L."/>
            <person name="Pamphile W."/>
            <person name="Crosby M."/>
            <person name="Shen M."/>
            <person name="Vamathevan J.J."/>
            <person name="Lam P."/>
            <person name="McDonald L.A."/>
            <person name="Utterback T.R."/>
            <person name="Zalewski C."/>
            <person name="Makarova K.S."/>
            <person name="Aravind L."/>
            <person name="Daly M.J."/>
            <person name="Minton K.W."/>
            <person name="Fleischmann R.D."/>
            <person name="Ketchum K.A."/>
            <person name="Nelson K.E."/>
            <person name="Salzberg S.L."/>
            <person name="Smith H.O."/>
            <person name="Venter J.C."/>
            <person name="Fraser C.M."/>
        </authorList>
    </citation>
    <scope>NUCLEOTIDE SEQUENCE [LARGE SCALE GENOMIC DNA]</scope>
    <source>
        <strain>ATCC 13939 / DSM 20539 / JCM 16871 / CCUG 27074 / LMG 4051 / NBRC 15346 / NCIMB 9279 / VKM B-1422 / R1</strain>
    </source>
</reference>
<sequence length="434" mass="45540">MTTGAPPFSGSSPQTTRPQTVAEKILSQRGSAAVYAGDLAVVEVDQVMVVDSIAQSFIERMERDLGAVPKYPERVSIVVDHVAPASTVSVAQAQKEAREYAAKTGVRLFDVGRGICHQVLMEEKLAQPGWIVLGSDSHSTTYGAVAAFGSGMGATDIALAAASGKTWLRVPESVKVTLTGDLRPGVTAKDVALEMIRVLGADGATYQSVEIHAGDRFTRGERMTLANLCVEAGAKAGLVVPGGEILTDYGYDVPAWVYPDEGAAYAREVEIDLSALHPRMSAPSEVDNVHDVAELRGLKVDQVFIGTCTNGRIEDLHAAAEVLRGRRVDPTTRLLVIPASSQVMEEALQDGTLLTLQRAGAVLGTPGCGPCMGRHQGVLAPGEVCVSTSNRNFIGRMGDKDAHIYLASPAVAAATAVMGRVALPEDVAQVAASA</sequence>
<evidence type="ECO:0000255" key="1">
    <source>
        <dbReference type="HAMAP-Rule" id="MF_01027"/>
    </source>
</evidence>
<feature type="chain" id="PRO_0000076856" description="3-isopropylmalate dehydratase large subunit 1">
    <location>
        <begin position="1"/>
        <end position="434"/>
    </location>
</feature>
<feature type="binding site" evidence="1">
    <location>
        <position position="308"/>
    </location>
    <ligand>
        <name>[4Fe-4S] cluster</name>
        <dbReference type="ChEBI" id="CHEBI:49883"/>
    </ligand>
</feature>
<feature type="binding site" evidence="1">
    <location>
        <position position="368"/>
    </location>
    <ligand>
        <name>[4Fe-4S] cluster</name>
        <dbReference type="ChEBI" id="CHEBI:49883"/>
    </ligand>
</feature>
<feature type="binding site" evidence="1">
    <location>
        <position position="371"/>
    </location>
    <ligand>
        <name>[4Fe-4S] cluster</name>
        <dbReference type="ChEBI" id="CHEBI:49883"/>
    </ligand>
</feature>